<reference key="1">
    <citation type="submission" date="2007-05" db="EMBL/GenBank/DDBJ databases">
        <title>Complete sequence of chromosome of Staphylococcus aureus subsp. aureus JH9.</title>
        <authorList>
            <consortium name="US DOE Joint Genome Institute"/>
            <person name="Copeland A."/>
            <person name="Lucas S."/>
            <person name="Lapidus A."/>
            <person name="Barry K."/>
            <person name="Detter J.C."/>
            <person name="Glavina del Rio T."/>
            <person name="Hammon N."/>
            <person name="Israni S."/>
            <person name="Pitluck S."/>
            <person name="Chain P."/>
            <person name="Malfatti S."/>
            <person name="Shin M."/>
            <person name="Vergez L."/>
            <person name="Schmutz J."/>
            <person name="Larimer F."/>
            <person name="Land M."/>
            <person name="Hauser L."/>
            <person name="Kyrpides N."/>
            <person name="Kim E."/>
            <person name="Tomasz A."/>
            <person name="Richardson P."/>
        </authorList>
    </citation>
    <scope>NUCLEOTIDE SEQUENCE [LARGE SCALE GENOMIC DNA]</scope>
    <source>
        <strain>JH9</strain>
    </source>
</reference>
<proteinExistence type="inferred from homology"/>
<feature type="chain" id="PRO_1000083344" description="Tagatose 1,6-diphosphate aldolase">
    <location>
        <begin position="1"/>
        <end position="326"/>
    </location>
</feature>
<accession>A5IUY1</accession>
<organism>
    <name type="scientific">Staphylococcus aureus (strain JH9)</name>
    <dbReference type="NCBI Taxonomy" id="359786"/>
    <lineage>
        <taxon>Bacteria</taxon>
        <taxon>Bacillati</taxon>
        <taxon>Bacillota</taxon>
        <taxon>Bacilli</taxon>
        <taxon>Bacillales</taxon>
        <taxon>Staphylococcaceae</taxon>
        <taxon>Staphylococcus</taxon>
    </lineage>
</organism>
<evidence type="ECO:0000255" key="1">
    <source>
        <dbReference type="HAMAP-Rule" id="MF_00734"/>
    </source>
</evidence>
<keyword id="KW-0423">Lactose metabolism</keyword>
<keyword id="KW-0456">Lyase</keyword>
<comment type="catalytic activity">
    <reaction evidence="1">
        <text>D-tagatofuranose 1,6-bisphosphate = D-glyceraldehyde 3-phosphate + dihydroxyacetone phosphate</text>
        <dbReference type="Rhea" id="RHEA:22948"/>
        <dbReference type="ChEBI" id="CHEBI:57642"/>
        <dbReference type="ChEBI" id="CHEBI:58694"/>
        <dbReference type="ChEBI" id="CHEBI:59776"/>
        <dbReference type="EC" id="4.1.2.40"/>
    </reaction>
</comment>
<comment type="pathway">
    <text evidence="1">Carbohydrate metabolism; D-tagatose 6-phosphate degradation; D-glyceraldehyde 3-phosphate and glycerone phosphate from D-tagatose 6-phosphate: step 2/2.</text>
</comment>
<comment type="similarity">
    <text evidence="1">Belongs to the aldolase LacD family.</text>
</comment>
<gene>
    <name evidence="1" type="primary">lacD</name>
    <name type="ordered locus">SaurJH9_2223</name>
</gene>
<sequence>MSKSNQKIASIEQLSNNEGIISALAFDQRGALKRMMAKHQTEEPTVAQIEQLKVLVAEELTQYASSILLDPEYGLPASDARNKDCGLLLAYEKTGYDVNAKGRLPDCLVEWSAKRLKEQGANAVKFLLYYDVDDAEEINIQKKAYIERIGSECVAEDIPFFLEVLTYDDNIPDNGSVEFAKVKPRKVNEAMKLFSEPRFNVDVLKVEVPVNMKYVEGFAEGEVVYTKEEAAQHFKDQDAATHLPYIYLSAGVSAELFQETLKFAHEAGAKFNGVLCGRATWSGAVQVYIEQGEDAAREWLRTTGFKNIDDLNKVLKDTATSWKQRK</sequence>
<name>LACD_STAA9</name>
<protein>
    <recommendedName>
        <fullName evidence="1">Tagatose 1,6-diphosphate aldolase</fullName>
        <ecNumber evidence="1">4.1.2.40</ecNumber>
    </recommendedName>
    <alternativeName>
        <fullName evidence="1">D-tagatose-1,6-bisphosphate aldolase</fullName>
    </alternativeName>
    <alternativeName>
        <fullName evidence="1">Tagatose-bisphosphate aldolase</fullName>
    </alternativeName>
</protein>
<dbReference type="EC" id="4.1.2.40" evidence="1"/>
<dbReference type="EMBL" id="CP000703">
    <property type="protein sequence ID" value="ABQ50004.1"/>
    <property type="molecule type" value="Genomic_DNA"/>
</dbReference>
<dbReference type="RefSeq" id="WP_000047009.1">
    <property type="nucleotide sequence ID" value="NC_009487.1"/>
</dbReference>
<dbReference type="SMR" id="A5IUY1"/>
<dbReference type="KEGG" id="saj:SaurJH9_2223"/>
<dbReference type="HOGENOM" id="CLU_058971_0_1_9"/>
<dbReference type="UniPathway" id="UPA00704">
    <property type="reaction ID" value="UER00716"/>
</dbReference>
<dbReference type="GO" id="GO:0061595">
    <property type="term" value="F:6-deoxy-6-sulfofructose-1-phosphate aldolase activity"/>
    <property type="evidence" value="ECO:0007669"/>
    <property type="project" value="TreeGrafter"/>
</dbReference>
<dbReference type="GO" id="GO:0009024">
    <property type="term" value="F:tagatose-6-phosphate kinase activity"/>
    <property type="evidence" value="ECO:0007669"/>
    <property type="project" value="InterPro"/>
</dbReference>
<dbReference type="GO" id="GO:0009025">
    <property type="term" value="F:tagatose-bisphosphate aldolase activity"/>
    <property type="evidence" value="ECO:0007669"/>
    <property type="project" value="UniProtKB-UniRule"/>
</dbReference>
<dbReference type="GO" id="GO:1902777">
    <property type="term" value="P:6-sulfoquinovose(1-) catabolic process"/>
    <property type="evidence" value="ECO:0007669"/>
    <property type="project" value="TreeGrafter"/>
</dbReference>
<dbReference type="GO" id="GO:2001059">
    <property type="term" value="P:D-tagatose 6-phosphate catabolic process"/>
    <property type="evidence" value="ECO:0007669"/>
    <property type="project" value="UniProtKB-UniRule"/>
</dbReference>
<dbReference type="GO" id="GO:0019512">
    <property type="term" value="P:lactose catabolic process via tagatose-6-phosphate"/>
    <property type="evidence" value="ECO:0007669"/>
    <property type="project" value="InterPro"/>
</dbReference>
<dbReference type="FunFam" id="3.20.20.70:FF:000137">
    <property type="entry name" value="Tagatose 1,6-diphosphate aldolase 2"/>
    <property type="match status" value="1"/>
</dbReference>
<dbReference type="Gene3D" id="3.20.20.70">
    <property type="entry name" value="Aldolase class I"/>
    <property type="match status" value="1"/>
</dbReference>
<dbReference type="HAMAP" id="MF_00734">
    <property type="entry name" value="LacD"/>
    <property type="match status" value="1"/>
</dbReference>
<dbReference type="InterPro" id="IPR013785">
    <property type="entry name" value="Aldolase_TIM"/>
</dbReference>
<dbReference type="InterPro" id="IPR002915">
    <property type="entry name" value="DeoC/FbaB/LacD_aldolase"/>
</dbReference>
<dbReference type="InterPro" id="IPR050552">
    <property type="entry name" value="LacD_aldolase"/>
</dbReference>
<dbReference type="InterPro" id="IPR005927">
    <property type="entry name" value="Tag_1.6-dipho_adolase"/>
</dbReference>
<dbReference type="NCBIfam" id="TIGR01232">
    <property type="entry name" value="lacD"/>
    <property type="match status" value="1"/>
</dbReference>
<dbReference type="NCBIfam" id="NF003180">
    <property type="entry name" value="PRK04161.1"/>
    <property type="match status" value="1"/>
</dbReference>
<dbReference type="NCBIfam" id="NF009065">
    <property type="entry name" value="PRK12399.1"/>
    <property type="match status" value="1"/>
</dbReference>
<dbReference type="NCBIfam" id="NF009498">
    <property type="entry name" value="PRK12858.1"/>
    <property type="match status" value="1"/>
</dbReference>
<dbReference type="PANTHER" id="PTHR39340">
    <property type="entry name" value="SULFOFRUCTOSEPHOSPHATE ALDOLASE"/>
    <property type="match status" value="1"/>
</dbReference>
<dbReference type="PANTHER" id="PTHR39340:SF1">
    <property type="entry name" value="SULFOFRUCTOSEPHOSPHATE ALDOLASE"/>
    <property type="match status" value="1"/>
</dbReference>
<dbReference type="Pfam" id="PF01791">
    <property type="entry name" value="DeoC"/>
    <property type="match status" value="1"/>
</dbReference>
<dbReference type="SMART" id="SM01133">
    <property type="entry name" value="DeoC"/>
    <property type="match status" value="1"/>
</dbReference>
<dbReference type="SUPFAM" id="SSF51569">
    <property type="entry name" value="Aldolase"/>
    <property type="match status" value="1"/>
</dbReference>